<name>ZSC9_HUMAN</name>
<feature type="chain" id="PRO_0000047446" description="Zinc finger and SCAN domain-containing protein 9">
    <location>
        <begin position="1"/>
        <end position="394"/>
    </location>
</feature>
<feature type="domain" description="SCAN box" evidence="2">
    <location>
        <begin position="52"/>
        <end position="134"/>
    </location>
</feature>
<feature type="zinc finger region" description="C2H2-type 1" evidence="1">
    <location>
        <begin position="254"/>
        <end position="276"/>
    </location>
</feature>
<feature type="zinc finger region" description="C2H2-type 2" evidence="1">
    <location>
        <begin position="282"/>
        <end position="304"/>
    </location>
</feature>
<feature type="zinc finger region" description="C2H2-type 3" evidence="1">
    <location>
        <begin position="310"/>
        <end position="332"/>
    </location>
</feature>
<feature type="zinc finger region" description="C2H2-type 4" evidence="1">
    <location>
        <begin position="338"/>
        <end position="360"/>
    </location>
</feature>
<feature type="zinc finger region" description="C2H2-type 5" evidence="1">
    <location>
        <begin position="366"/>
        <end position="388"/>
    </location>
</feature>
<feature type="cross-link" description="Glycyl lysine isopeptide (Lys-Gly) (interchain with G-Cter in SUMO2)" evidence="6">
    <location>
        <position position="26"/>
    </location>
</feature>
<feature type="cross-link" description="Glycyl lysine isopeptide (Lys-Gly) (interchain with G-Cter in SUMO2)" evidence="6">
    <location>
        <position position="215"/>
    </location>
</feature>
<feature type="cross-link" description="Glycyl lysine isopeptide (Lys-Gly) (interchain with G-Cter in SUMO2)" evidence="6">
    <location>
        <position position="238"/>
    </location>
</feature>
<feature type="splice variant" id="VSP_044798" description="In isoform 2." evidence="4">
    <original>T</original>
    <variation>TDLIRSLRRRAVLIPLGAHLFSTDTFLFSKPVVIPQLKGGGETWPNNRGVLR</variation>
    <location>
        <position position="189"/>
    </location>
</feature>
<feature type="sequence variant" id="VAR_076868" description="In dbSNP:rs148219046." evidence="3">
    <original>H</original>
    <variation>R</variation>
    <location>
        <position position="254"/>
    </location>
</feature>
<feature type="sequence conflict" description="In Ref. 2; BAG64928." evidence="5" ref="2">
    <original>E</original>
    <variation>G</variation>
    <location>
        <position position="7"/>
    </location>
</feature>
<gene>
    <name type="primary">ZSCAN9</name>
    <name type="synonym">ZNF193</name>
    <name type="ORF">PIG12</name>
</gene>
<organism>
    <name type="scientific">Homo sapiens</name>
    <name type="common">Human</name>
    <dbReference type="NCBI Taxonomy" id="9606"/>
    <lineage>
        <taxon>Eukaryota</taxon>
        <taxon>Metazoa</taxon>
        <taxon>Chordata</taxon>
        <taxon>Craniata</taxon>
        <taxon>Vertebrata</taxon>
        <taxon>Euteleostomi</taxon>
        <taxon>Mammalia</taxon>
        <taxon>Eutheria</taxon>
        <taxon>Euarchontoglires</taxon>
        <taxon>Primates</taxon>
        <taxon>Haplorrhini</taxon>
        <taxon>Catarrhini</taxon>
        <taxon>Hominidae</taxon>
        <taxon>Homo</taxon>
    </lineage>
</organism>
<accession>O15535</accession>
<accession>B4E1W6</accession>
<accession>E7EVQ2</accession>
<accession>Q2TTR1</accession>
<proteinExistence type="evidence at protein level"/>
<protein>
    <recommendedName>
        <fullName>Zinc finger and SCAN domain-containing protein 9</fullName>
    </recommendedName>
    <alternativeName>
        <fullName>Cell proliferation-inducing gene 12 protein</fullName>
    </alternativeName>
    <alternativeName>
        <fullName>PRD51</fullName>
    </alternativeName>
    <alternativeName>
        <fullName>Zinc finger protein 193</fullName>
    </alternativeName>
</protein>
<dbReference type="EMBL" id="U62392">
    <property type="protein sequence ID" value="AAC51659.1"/>
    <property type="molecule type" value="mRNA"/>
</dbReference>
<dbReference type="EMBL" id="U88082">
    <property type="protein sequence ID" value="AAC51661.1"/>
    <property type="molecule type" value="Genomic_DNA"/>
</dbReference>
<dbReference type="EMBL" id="U88081">
    <property type="protein sequence ID" value="AAC51661.1"/>
    <property type="status" value="JOINED"/>
    <property type="molecule type" value="Genomic_DNA"/>
</dbReference>
<dbReference type="EMBL" id="AK304013">
    <property type="protein sequence ID" value="BAG64928.1"/>
    <property type="molecule type" value="mRNA"/>
</dbReference>
<dbReference type="EMBL" id="AY550973">
    <property type="protein sequence ID" value="AAT52219.1"/>
    <property type="molecule type" value="mRNA"/>
</dbReference>
<dbReference type="EMBL" id="AL022393">
    <property type="status" value="NOT_ANNOTATED_CDS"/>
    <property type="molecule type" value="Genomic_DNA"/>
</dbReference>
<dbReference type="EMBL" id="CH471081">
    <property type="protein sequence ID" value="EAX03140.1"/>
    <property type="molecule type" value="Genomic_DNA"/>
</dbReference>
<dbReference type="EMBL" id="BC010374">
    <property type="protein sequence ID" value="AAH10374.1"/>
    <property type="molecule type" value="mRNA"/>
</dbReference>
<dbReference type="CCDS" id="CCDS4646.1">
    <molecule id="O15535-1"/>
</dbReference>
<dbReference type="CCDS" id="CCDS56407.1">
    <molecule id="O15535-2"/>
</dbReference>
<dbReference type="RefSeq" id="NP_001186408.1">
    <molecule id="O15535-2"/>
    <property type="nucleotide sequence ID" value="NM_001199479.2"/>
</dbReference>
<dbReference type="RefSeq" id="NP_001186409.1">
    <molecule id="O15535-1"/>
    <property type="nucleotide sequence ID" value="NM_001199480.2"/>
</dbReference>
<dbReference type="RefSeq" id="NP_006290.1">
    <molecule id="O15535-1"/>
    <property type="nucleotide sequence ID" value="NM_006299.5"/>
</dbReference>
<dbReference type="RefSeq" id="XP_016866756.1">
    <property type="nucleotide sequence ID" value="XM_017011267.1"/>
</dbReference>
<dbReference type="RefSeq" id="XP_047275273.1">
    <molecule id="O15535-2"/>
    <property type="nucleotide sequence ID" value="XM_047419317.1"/>
</dbReference>
<dbReference type="RefSeq" id="XP_054212331.1">
    <molecule id="O15535-2"/>
    <property type="nucleotide sequence ID" value="XM_054356356.1"/>
</dbReference>
<dbReference type="SMR" id="O15535"/>
<dbReference type="BioGRID" id="113530">
    <property type="interactions" value="19"/>
</dbReference>
<dbReference type="FunCoup" id="O15535">
    <property type="interactions" value="34"/>
</dbReference>
<dbReference type="IntAct" id="O15535">
    <property type="interactions" value="32"/>
</dbReference>
<dbReference type="MINT" id="O15535"/>
<dbReference type="STRING" id="9606.ENSP00000404074"/>
<dbReference type="GlyGen" id="O15535">
    <property type="glycosylation" value="1 site, 1 O-linked glycan (1 site)"/>
</dbReference>
<dbReference type="iPTMnet" id="O15535"/>
<dbReference type="PhosphoSitePlus" id="O15535"/>
<dbReference type="BioMuta" id="ZSCAN9"/>
<dbReference type="jPOST" id="O15535"/>
<dbReference type="MassIVE" id="O15535"/>
<dbReference type="PeptideAtlas" id="O15535"/>
<dbReference type="ProteomicsDB" id="18685"/>
<dbReference type="ProteomicsDB" id="48744">
    <molecule id="O15535-1"/>
</dbReference>
<dbReference type="Antibodypedia" id="25843">
    <property type="antibodies" value="154 antibodies from 19 providers"/>
</dbReference>
<dbReference type="DNASU" id="7746"/>
<dbReference type="Ensembl" id="ENST00000252207.10">
    <molecule id="O15535-1"/>
    <property type="protein sequence ID" value="ENSP00000252207.5"/>
    <property type="gene ID" value="ENSG00000137185.13"/>
</dbReference>
<dbReference type="Ensembl" id="ENST00000425468.6">
    <molecule id="O15535-2"/>
    <property type="protein sequence ID" value="ENSP00000404074.2"/>
    <property type="gene ID" value="ENSG00000137185.13"/>
</dbReference>
<dbReference type="Ensembl" id="ENST00000531979.5">
    <molecule id="O15535-1"/>
    <property type="protein sequence ID" value="ENSP00000433402.1"/>
    <property type="gene ID" value="ENSG00000137185.13"/>
</dbReference>
<dbReference type="GeneID" id="7746"/>
<dbReference type="KEGG" id="hsa:7746"/>
<dbReference type="MANE-Select" id="ENST00000252207.10">
    <property type="protein sequence ID" value="ENSP00000252207.5"/>
    <property type="RefSeq nucleotide sequence ID" value="NM_006299.5"/>
    <property type="RefSeq protein sequence ID" value="NP_006290.1"/>
</dbReference>
<dbReference type="UCSC" id="uc003nkq.3">
    <molecule id="O15535-1"/>
    <property type="organism name" value="human"/>
</dbReference>
<dbReference type="AGR" id="HGNC:12984"/>
<dbReference type="CTD" id="7746"/>
<dbReference type="DisGeNET" id="7746"/>
<dbReference type="GeneCards" id="ZSCAN9"/>
<dbReference type="HGNC" id="HGNC:12984">
    <property type="gene designation" value="ZSCAN9"/>
</dbReference>
<dbReference type="HPA" id="ENSG00000137185">
    <property type="expression patterns" value="Low tissue specificity"/>
</dbReference>
<dbReference type="MIM" id="602246">
    <property type="type" value="gene"/>
</dbReference>
<dbReference type="neXtProt" id="NX_O15535"/>
<dbReference type="OpenTargets" id="ENSG00000137185"/>
<dbReference type="PharmGKB" id="PA37564"/>
<dbReference type="VEuPathDB" id="HostDB:ENSG00000137185"/>
<dbReference type="GeneTree" id="ENSGT00940000163521"/>
<dbReference type="HOGENOM" id="CLU_002678_49_3_1"/>
<dbReference type="InParanoid" id="O15535"/>
<dbReference type="OMA" id="ESHLQMQ"/>
<dbReference type="OrthoDB" id="654211at2759"/>
<dbReference type="PAN-GO" id="O15535">
    <property type="GO annotations" value="3 GO annotations based on evolutionary models"/>
</dbReference>
<dbReference type="PhylomeDB" id="O15535"/>
<dbReference type="TreeFam" id="TF338304"/>
<dbReference type="PathwayCommons" id="O15535"/>
<dbReference type="SignaLink" id="O15535"/>
<dbReference type="BioGRID-ORCS" id="7746">
    <property type="hits" value="5 hits in 1173 CRISPR screens"/>
</dbReference>
<dbReference type="GeneWiki" id="ZNF193"/>
<dbReference type="GenomeRNAi" id="7746"/>
<dbReference type="Pharos" id="O15535">
    <property type="development level" value="Tdark"/>
</dbReference>
<dbReference type="PRO" id="PR:O15535"/>
<dbReference type="Proteomes" id="UP000005640">
    <property type="component" value="Chromosome 6"/>
</dbReference>
<dbReference type="RNAct" id="O15535">
    <property type="molecule type" value="protein"/>
</dbReference>
<dbReference type="Bgee" id="ENSG00000137185">
    <property type="expression patterns" value="Expressed in ganglionic eminence and 130 other cell types or tissues"/>
</dbReference>
<dbReference type="ExpressionAtlas" id="O15535">
    <property type="expression patterns" value="baseline and differential"/>
</dbReference>
<dbReference type="GO" id="GO:0005634">
    <property type="term" value="C:nucleus"/>
    <property type="evidence" value="ECO:0007669"/>
    <property type="project" value="UniProtKB-SubCell"/>
</dbReference>
<dbReference type="GO" id="GO:0000981">
    <property type="term" value="F:DNA-binding transcription factor activity, RNA polymerase II-specific"/>
    <property type="evidence" value="ECO:0000318"/>
    <property type="project" value="GO_Central"/>
</dbReference>
<dbReference type="GO" id="GO:0000978">
    <property type="term" value="F:RNA polymerase II cis-regulatory region sequence-specific DNA binding"/>
    <property type="evidence" value="ECO:0000318"/>
    <property type="project" value="GO_Central"/>
</dbReference>
<dbReference type="GO" id="GO:1990837">
    <property type="term" value="F:sequence-specific double-stranded DNA binding"/>
    <property type="evidence" value="ECO:0000314"/>
    <property type="project" value="ARUK-UCL"/>
</dbReference>
<dbReference type="GO" id="GO:0008270">
    <property type="term" value="F:zinc ion binding"/>
    <property type="evidence" value="ECO:0007669"/>
    <property type="project" value="UniProtKB-KW"/>
</dbReference>
<dbReference type="GO" id="GO:0006357">
    <property type="term" value="P:regulation of transcription by RNA polymerase II"/>
    <property type="evidence" value="ECO:0000318"/>
    <property type="project" value="GO_Central"/>
</dbReference>
<dbReference type="CDD" id="cd07936">
    <property type="entry name" value="SCAN"/>
    <property type="match status" value="1"/>
</dbReference>
<dbReference type="FunFam" id="3.30.160.60:FF:001320">
    <property type="entry name" value="Zinc finger and SCAN domain containing 9"/>
    <property type="match status" value="1"/>
</dbReference>
<dbReference type="FunFam" id="3.30.160.60:FF:001528">
    <property type="entry name" value="Zinc finger and SCAN domain containing 9"/>
    <property type="match status" value="1"/>
</dbReference>
<dbReference type="FunFam" id="3.30.160.60:FF:000551">
    <property type="entry name" value="zinc finger protein 197 isoform X1"/>
    <property type="match status" value="1"/>
</dbReference>
<dbReference type="FunFam" id="3.30.160.60:FF:000206">
    <property type="entry name" value="zinc finger protein 202 isoform X1"/>
    <property type="match status" value="1"/>
</dbReference>
<dbReference type="FunFam" id="1.10.4020.10:FF:000001">
    <property type="entry name" value="zinc finger protein 263 isoform X1"/>
    <property type="match status" value="1"/>
</dbReference>
<dbReference type="FunFam" id="3.30.160.60:FF:000642">
    <property type="entry name" value="Zinc finger with KRAB and SCAN domains 2"/>
    <property type="match status" value="1"/>
</dbReference>
<dbReference type="Gene3D" id="3.30.160.60">
    <property type="entry name" value="Classic Zinc Finger"/>
    <property type="match status" value="5"/>
</dbReference>
<dbReference type="Gene3D" id="1.10.4020.10">
    <property type="entry name" value="DNA breaking-rejoining enzymes"/>
    <property type="match status" value="1"/>
</dbReference>
<dbReference type="InterPro" id="IPR003309">
    <property type="entry name" value="SCAN_dom"/>
</dbReference>
<dbReference type="InterPro" id="IPR038269">
    <property type="entry name" value="SCAN_sf"/>
</dbReference>
<dbReference type="InterPro" id="IPR036236">
    <property type="entry name" value="Znf_C2H2_sf"/>
</dbReference>
<dbReference type="InterPro" id="IPR013087">
    <property type="entry name" value="Znf_C2H2_type"/>
</dbReference>
<dbReference type="PANTHER" id="PTHR23226">
    <property type="entry name" value="ZINC FINGER AND SCAN DOMAIN-CONTAINING"/>
    <property type="match status" value="1"/>
</dbReference>
<dbReference type="PANTHER" id="PTHR23226:SF15">
    <property type="entry name" value="ZINC FINGER AND SCAN DOMAIN-CONTAINING PROTEIN 9"/>
    <property type="match status" value="1"/>
</dbReference>
<dbReference type="Pfam" id="PF02023">
    <property type="entry name" value="SCAN"/>
    <property type="match status" value="1"/>
</dbReference>
<dbReference type="Pfam" id="PF00096">
    <property type="entry name" value="zf-C2H2"/>
    <property type="match status" value="5"/>
</dbReference>
<dbReference type="SMART" id="SM00431">
    <property type="entry name" value="SCAN"/>
    <property type="match status" value="1"/>
</dbReference>
<dbReference type="SMART" id="SM00355">
    <property type="entry name" value="ZnF_C2H2"/>
    <property type="match status" value="5"/>
</dbReference>
<dbReference type="SUPFAM" id="SSF57667">
    <property type="entry name" value="beta-beta-alpha zinc fingers"/>
    <property type="match status" value="3"/>
</dbReference>
<dbReference type="SUPFAM" id="SSF47353">
    <property type="entry name" value="Retrovirus capsid dimerization domain-like"/>
    <property type="match status" value="1"/>
</dbReference>
<dbReference type="PROSITE" id="PS50804">
    <property type="entry name" value="SCAN_BOX"/>
    <property type="match status" value="1"/>
</dbReference>
<dbReference type="PROSITE" id="PS00028">
    <property type="entry name" value="ZINC_FINGER_C2H2_1"/>
    <property type="match status" value="5"/>
</dbReference>
<dbReference type="PROSITE" id="PS50157">
    <property type="entry name" value="ZINC_FINGER_C2H2_2"/>
    <property type="match status" value="5"/>
</dbReference>
<evidence type="ECO:0000255" key="1">
    <source>
        <dbReference type="PROSITE-ProRule" id="PRU00042"/>
    </source>
</evidence>
<evidence type="ECO:0000255" key="2">
    <source>
        <dbReference type="PROSITE-ProRule" id="PRU00187"/>
    </source>
</evidence>
<evidence type="ECO:0000269" key="3">
    <source>
    </source>
</evidence>
<evidence type="ECO:0000303" key="4">
    <source>
    </source>
</evidence>
<evidence type="ECO:0000305" key="5"/>
<evidence type="ECO:0007744" key="6">
    <source>
    </source>
</evidence>
<reference key="1">
    <citation type="journal article" date="1997" name="Genomics">
        <title>Three genes encoding zinc finger proteins on human chromosome 6p21.3: members of a new subclass of the Kruppel gene family containing the conserved SCAN box domain.</title>
        <authorList>
            <person name="Lee P.L."/>
            <person name="Gelbart T."/>
            <person name="West C."/>
            <person name="Adams M."/>
            <person name="Blackstone R."/>
            <person name="Beutler E."/>
        </authorList>
    </citation>
    <scope>NUCLEOTIDE SEQUENCE [GENOMIC DNA / MRNA] (ISOFORM 1)</scope>
    <source>
        <tissue>Duodenum</tissue>
    </source>
</reference>
<reference key="2">
    <citation type="journal article" date="2004" name="Nat. Genet.">
        <title>Complete sequencing and characterization of 21,243 full-length human cDNAs.</title>
        <authorList>
            <person name="Ota T."/>
            <person name="Suzuki Y."/>
            <person name="Nishikawa T."/>
            <person name="Otsuki T."/>
            <person name="Sugiyama T."/>
            <person name="Irie R."/>
            <person name="Wakamatsu A."/>
            <person name="Hayashi K."/>
            <person name="Sato H."/>
            <person name="Nagai K."/>
            <person name="Kimura K."/>
            <person name="Makita H."/>
            <person name="Sekine M."/>
            <person name="Obayashi M."/>
            <person name="Nishi T."/>
            <person name="Shibahara T."/>
            <person name="Tanaka T."/>
            <person name="Ishii S."/>
            <person name="Yamamoto J."/>
            <person name="Saito K."/>
            <person name="Kawai Y."/>
            <person name="Isono Y."/>
            <person name="Nakamura Y."/>
            <person name="Nagahari K."/>
            <person name="Murakami K."/>
            <person name="Yasuda T."/>
            <person name="Iwayanagi T."/>
            <person name="Wagatsuma M."/>
            <person name="Shiratori A."/>
            <person name="Sudo H."/>
            <person name="Hosoiri T."/>
            <person name="Kaku Y."/>
            <person name="Kodaira H."/>
            <person name="Kondo H."/>
            <person name="Sugawara M."/>
            <person name="Takahashi M."/>
            <person name="Kanda K."/>
            <person name="Yokoi T."/>
            <person name="Furuya T."/>
            <person name="Kikkawa E."/>
            <person name="Omura Y."/>
            <person name="Abe K."/>
            <person name="Kamihara K."/>
            <person name="Katsuta N."/>
            <person name="Sato K."/>
            <person name="Tanikawa M."/>
            <person name="Yamazaki M."/>
            <person name="Ninomiya K."/>
            <person name="Ishibashi T."/>
            <person name="Yamashita H."/>
            <person name="Murakawa K."/>
            <person name="Fujimori K."/>
            <person name="Tanai H."/>
            <person name="Kimata M."/>
            <person name="Watanabe M."/>
            <person name="Hiraoka S."/>
            <person name="Chiba Y."/>
            <person name="Ishida S."/>
            <person name="Ono Y."/>
            <person name="Takiguchi S."/>
            <person name="Watanabe S."/>
            <person name="Yosida M."/>
            <person name="Hotuta T."/>
            <person name="Kusano J."/>
            <person name="Kanehori K."/>
            <person name="Takahashi-Fujii A."/>
            <person name="Hara H."/>
            <person name="Tanase T.-O."/>
            <person name="Nomura Y."/>
            <person name="Togiya S."/>
            <person name="Komai F."/>
            <person name="Hara R."/>
            <person name="Takeuchi K."/>
            <person name="Arita M."/>
            <person name="Imose N."/>
            <person name="Musashino K."/>
            <person name="Yuuki H."/>
            <person name="Oshima A."/>
            <person name="Sasaki N."/>
            <person name="Aotsuka S."/>
            <person name="Yoshikawa Y."/>
            <person name="Matsunawa H."/>
            <person name="Ichihara T."/>
            <person name="Shiohata N."/>
            <person name="Sano S."/>
            <person name="Moriya S."/>
            <person name="Momiyama H."/>
            <person name="Satoh N."/>
            <person name="Takami S."/>
            <person name="Terashima Y."/>
            <person name="Suzuki O."/>
            <person name="Nakagawa S."/>
            <person name="Senoh A."/>
            <person name="Mizoguchi H."/>
            <person name="Goto Y."/>
            <person name="Shimizu F."/>
            <person name="Wakebe H."/>
            <person name="Hishigaki H."/>
            <person name="Watanabe T."/>
            <person name="Sugiyama A."/>
            <person name="Takemoto M."/>
            <person name="Kawakami B."/>
            <person name="Yamazaki M."/>
            <person name="Watanabe K."/>
            <person name="Kumagai A."/>
            <person name="Itakura S."/>
            <person name="Fukuzumi Y."/>
            <person name="Fujimori Y."/>
            <person name="Komiyama M."/>
            <person name="Tashiro H."/>
            <person name="Tanigami A."/>
            <person name="Fujiwara T."/>
            <person name="Ono T."/>
            <person name="Yamada K."/>
            <person name="Fujii Y."/>
            <person name="Ozaki K."/>
            <person name="Hirao M."/>
            <person name="Ohmori Y."/>
            <person name="Kawabata A."/>
            <person name="Hikiji T."/>
            <person name="Kobatake N."/>
            <person name="Inagaki H."/>
            <person name="Ikema Y."/>
            <person name="Okamoto S."/>
            <person name="Okitani R."/>
            <person name="Kawakami T."/>
            <person name="Noguchi S."/>
            <person name="Itoh T."/>
            <person name="Shigeta K."/>
            <person name="Senba T."/>
            <person name="Matsumura K."/>
            <person name="Nakajima Y."/>
            <person name="Mizuno T."/>
            <person name="Morinaga M."/>
            <person name="Sasaki M."/>
            <person name="Togashi T."/>
            <person name="Oyama M."/>
            <person name="Hata H."/>
            <person name="Watanabe M."/>
            <person name="Komatsu T."/>
            <person name="Mizushima-Sugano J."/>
            <person name="Satoh T."/>
            <person name="Shirai Y."/>
            <person name="Takahashi Y."/>
            <person name="Nakagawa K."/>
            <person name="Okumura K."/>
            <person name="Nagase T."/>
            <person name="Nomura N."/>
            <person name="Kikuchi H."/>
            <person name="Masuho Y."/>
            <person name="Yamashita R."/>
            <person name="Nakai K."/>
            <person name="Yada T."/>
            <person name="Nakamura Y."/>
            <person name="Ohara O."/>
            <person name="Isogai T."/>
            <person name="Sugano S."/>
        </authorList>
    </citation>
    <scope>NUCLEOTIDE SEQUENCE [LARGE SCALE MRNA] (ISOFORM 2)</scope>
    <source>
        <tissue>Trachea</tissue>
    </source>
</reference>
<reference key="3">
    <citation type="submission" date="2004-02" db="EMBL/GenBank/DDBJ databases">
        <title>Identification of a human cell proliferation inducing gene.</title>
        <authorList>
            <person name="Kim J.W."/>
        </authorList>
    </citation>
    <scope>NUCLEOTIDE SEQUENCE [LARGE SCALE MRNA] (ISOFORM 1)</scope>
</reference>
<reference key="4">
    <citation type="journal article" date="2003" name="Nature">
        <title>The DNA sequence and analysis of human chromosome 6.</title>
        <authorList>
            <person name="Mungall A.J."/>
            <person name="Palmer S.A."/>
            <person name="Sims S.K."/>
            <person name="Edwards C.A."/>
            <person name="Ashurst J.L."/>
            <person name="Wilming L."/>
            <person name="Jones M.C."/>
            <person name="Horton R."/>
            <person name="Hunt S.E."/>
            <person name="Scott C.E."/>
            <person name="Gilbert J.G.R."/>
            <person name="Clamp M.E."/>
            <person name="Bethel G."/>
            <person name="Milne S."/>
            <person name="Ainscough R."/>
            <person name="Almeida J.P."/>
            <person name="Ambrose K.D."/>
            <person name="Andrews T.D."/>
            <person name="Ashwell R.I.S."/>
            <person name="Babbage A.K."/>
            <person name="Bagguley C.L."/>
            <person name="Bailey J."/>
            <person name="Banerjee R."/>
            <person name="Barker D.J."/>
            <person name="Barlow K.F."/>
            <person name="Bates K."/>
            <person name="Beare D.M."/>
            <person name="Beasley H."/>
            <person name="Beasley O."/>
            <person name="Bird C.P."/>
            <person name="Blakey S.E."/>
            <person name="Bray-Allen S."/>
            <person name="Brook J."/>
            <person name="Brown A.J."/>
            <person name="Brown J.Y."/>
            <person name="Burford D.C."/>
            <person name="Burrill W."/>
            <person name="Burton J."/>
            <person name="Carder C."/>
            <person name="Carter N.P."/>
            <person name="Chapman J.C."/>
            <person name="Clark S.Y."/>
            <person name="Clark G."/>
            <person name="Clee C.M."/>
            <person name="Clegg S."/>
            <person name="Cobley V."/>
            <person name="Collier R.E."/>
            <person name="Collins J.E."/>
            <person name="Colman L.K."/>
            <person name="Corby N.R."/>
            <person name="Coville G.J."/>
            <person name="Culley K.M."/>
            <person name="Dhami P."/>
            <person name="Davies J."/>
            <person name="Dunn M."/>
            <person name="Earthrowl M.E."/>
            <person name="Ellington A.E."/>
            <person name="Evans K.A."/>
            <person name="Faulkner L."/>
            <person name="Francis M.D."/>
            <person name="Frankish A."/>
            <person name="Frankland J."/>
            <person name="French L."/>
            <person name="Garner P."/>
            <person name="Garnett J."/>
            <person name="Ghori M.J."/>
            <person name="Gilby L.M."/>
            <person name="Gillson C.J."/>
            <person name="Glithero R.J."/>
            <person name="Grafham D.V."/>
            <person name="Grant M."/>
            <person name="Gribble S."/>
            <person name="Griffiths C."/>
            <person name="Griffiths M.N.D."/>
            <person name="Hall R."/>
            <person name="Halls K.S."/>
            <person name="Hammond S."/>
            <person name="Harley J.L."/>
            <person name="Hart E.A."/>
            <person name="Heath P.D."/>
            <person name="Heathcott R."/>
            <person name="Holmes S.J."/>
            <person name="Howden P.J."/>
            <person name="Howe K.L."/>
            <person name="Howell G.R."/>
            <person name="Huckle E."/>
            <person name="Humphray S.J."/>
            <person name="Humphries M.D."/>
            <person name="Hunt A.R."/>
            <person name="Johnson C.M."/>
            <person name="Joy A.A."/>
            <person name="Kay M."/>
            <person name="Keenan S.J."/>
            <person name="Kimberley A.M."/>
            <person name="King A."/>
            <person name="Laird G.K."/>
            <person name="Langford C."/>
            <person name="Lawlor S."/>
            <person name="Leongamornlert D.A."/>
            <person name="Leversha M."/>
            <person name="Lloyd C.R."/>
            <person name="Lloyd D.M."/>
            <person name="Loveland J.E."/>
            <person name="Lovell J."/>
            <person name="Martin S."/>
            <person name="Mashreghi-Mohammadi M."/>
            <person name="Maslen G.L."/>
            <person name="Matthews L."/>
            <person name="McCann O.T."/>
            <person name="McLaren S.J."/>
            <person name="McLay K."/>
            <person name="McMurray A."/>
            <person name="Moore M.J.F."/>
            <person name="Mullikin J.C."/>
            <person name="Niblett D."/>
            <person name="Nickerson T."/>
            <person name="Novik K.L."/>
            <person name="Oliver K."/>
            <person name="Overton-Larty E.K."/>
            <person name="Parker A."/>
            <person name="Patel R."/>
            <person name="Pearce A.V."/>
            <person name="Peck A.I."/>
            <person name="Phillimore B.J.C.T."/>
            <person name="Phillips S."/>
            <person name="Plumb R.W."/>
            <person name="Porter K.M."/>
            <person name="Ramsey Y."/>
            <person name="Ranby S.A."/>
            <person name="Rice C.M."/>
            <person name="Ross M.T."/>
            <person name="Searle S.M."/>
            <person name="Sehra H.K."/>
            <person name="Sheridan E."/>
            <person name="Skuce C.D."/>
            <person name="Smith S."/>
            <person name="Smith M."/>
            <person name="Spraggon L."/>
            <person name="Squares S.L."/>
            <person name="Steward C.A."/>
            <person name="Sycamore N."/>
            <person name="Tamlyn-Hall G."/>
            <person name="Tester J."/>
            <person name="Theaker A.J."/>
            <person name="Thomas D.W."/>
            <person name="Thorpe A."/>
            <person name="Tracey A."/>
            <person name="Tromans A."/>
            <person name="Tubby B."/>
            <person name="Wall M."/>
            <person name="Wallis J.M."/>
            <person name="West A.P."/>
            <person name="White S.S."/>
            <person name="Whitehead S.L."/>
            <person name="Whittaker H."/>
            <person name="Wild A."/>
            <person name="Willey D.J."/>
            <person name="Wilmer T.E."/>
            <person name="Wood J.M."/>
            <person name="Wray P.W."/>
            <person name="Wyatt J.C."/>
            <person name="Young L."/>
            <person name="Younger R.M."/>
            <person name="Bentley D.R."/>
            <person name="Coulson A."/>
            <person name="Durbin R.M."/>
            <person name="Hubbard T."/>
            <person name="Sulston J.E."/>
            <person name="Dunham I."/>
            <person name="Rogers J."/>
            <person name="Beck S."/>
        </authorList>
    </citation>
    <scope>NUCLEOTIDE SEQUENCE [LARGE SCALE GENOMIC DNA]</scope>
</reference>
<reference key="5">
    <citation type="submission" date="2005-07" db="EMBL/GenBank/DDBJ databases">
        <authorList>
            <person name="Mural R.J."/>
            <person name="Istrail S."/>
            <person name="Sutton G.G."/>
            <person name="Florea L."/>
            <person name="Halpern A.L."/>
            <person name="Mobarry C.M."/>
            <person name="Lippert R."/>
            <person name="Walenz B."/>
            <person name="Shatkay H."/>
            <person name="Dew I."/>
            <person name="Miller J.R."/>
            <person name="Flanigan M.J."/>
            <person name="Edwards N.J."/>
            <person name="Bolanos R."/>
            <person name="Fasulo D."/>
            <person name="Halldorsson B.V."/>
            <person name="Hannenhalli S."/>
            <person name="Turner R."/>
            <person name="Yooseph S."/>
            <person name="Lu F."/>
            <person name="Nusskern D.R."/>
            <person name="Shue B.C."/>
            <person name="Zheng X.H."/>
            <person name="Zhong F."/>
            <person name="Delcher A.L."/>
            <person name="Huson D.H."/>
            <person name="Kravitz S.A."/>
            <person name="Mouchard L."/>
            <person name="Reinert K."/>
            <person name="Remington K.A."/>
            <person name="Clark A.G."/>
            <person name="Waterman M.S."/>
            <person name="Eichler E.E."/>
            <person name="Adams M.D."/>
            <person name="Hunkapiller M.W."/>
            <person name="Myers E.W."/>
            <person name="Venter J.C."/>
        </authorList>
    </citation>
    <scope>NUCLEOTIDE SEQUENCE [LARGE SCALE GENOMIC DNA]</scope>
</reference>
<reference key="6">
    <citation type="journal article" date="2004" name="Genome Res.">
        <title>The status, quality, and expansion of the NIH full-length cDNA project: the Mammalian Gene Collection (MGC).</title>
        <authorList>
            <consortium name="The MGC Project Team"/>
        </authorList>
    </citation>
    <scope>NUCLEOTIDE SEQUENCE [LARGE SCALE MRNA] (ISOFORM 1)</scope>
    <source>
        <tissue>Bone marrow</tissue>
    </source>
</reference>
<reference key="7">
    <citation type="journal article" date="2017" name="Nat. Struct. Mol. Biol.">
        <title>Site-specific mapping of the human SUMO proteome reveals co-modification with phosphorylation.</title>
        <authorList>
            <person name="Hendriks I.A."/>
            <person name="Lyon D."/>
            <person name="Young C."/>
            <person name="Jensen L.J."/>
            <person name="Vertegaal A.C."/>
            <person name="Nielsen M.L."/>
        </authorList>
    </citation>
    <scope>SUMOYLATION [LARGE SCALE ANALYSIS] AT LYS-26; LYS-215 AND LYS-238</scope>
    <scope>IDENTIFICATION BY MASS SPECTROMETRY [LARGE SCALE ANALYSIS]</scope>
</reference>
<reference key="8">
    <citation type="journal article" date="2014" name="Nat. Genet.">
        <title>TDP2 protects transcription from abortive topoisomerase activity and is required for normal neural function.</title>
        <authorList>
            <person name="Gomez-Herreros F."/>
            <person name="Schuurs-Hoeijmakers J.H."/>
            <person name="McCormack M."/>
            <person name="Greally M.T."/>
            <person name="Rulten S."/>
            <person name="Romero-Granados R."/>
            <person name="Counihan T.J."/>
            <person name="Chaila E."/>
            <person name="Conroy J."/>
            <person name="Ennis S."/>
            <person name="Delanty N."/>
            <person name="Cortes-Ledesma F."/>
            <person name="de Brouwer A.P."/>
            <person name="Cavalleri G.L."/>
            <person name="El-Khamisy S.F."/>
            <person name="de Vries B.B."/>
            <person name="Caldecott K.W."/>
        </authorList>
    </citation>
    <scope>VARIANT ARG-254</scope>
</reference>
<sequence length="394" mass="45954">MNTNSKEVLSLGVQVPEAWEELLTMKVEAKSHLQWQESRLKRSNPLAREIFRRHFRQLCYQETPGPREALTRLQELCYQWLRPHVSTKEQILDLLVLEQFLSILPKELQGWVREHCPESGEEAVILLEDLERELDEPQHEMVAHRHRQEVLCKEMVPLAEQTPLTLQSQPKEPQLTCDSAQKCHSIGETDEVTKTEDRELVLRKDCPKIVEPHGKMFNEQTWEVSQQDPSHGEVGEHKDRIERQWGNLLGEGQHKCDECGKSFTQSSGLIRHQRIHTGERPYECNECGKAFSRSSGLFNHRGIHNIQKRYHCKECGKVFSQSAGLIQHQRIHKGEKPYQCSQCSKSYSRRSFLIEHQRSHTGERPHQCIECGKSFNRHCNLIRHQKIHTVAELV</sequence>
<keyword id="KW-0025">Alternative splicing</keyword>
<keyword id="KW-0238">DNA-binding</keyword>
<keyword id="KW-1017">Isopeptide bond</keyword>
<keyword id="KW-0479">Metal-binding</keyword>
<keyword id="KW-0539">Nucleus</keyword>
<keyword id="KW-1267">Proteomics identification</keyword>
<keyword id="KW-1185">Reference proteome</keyword>
<keyword id="KW-0677">Repeat</keyword>
<keyword id="KW-0804">Transcription</keyword>
<keyword id="KW-0805">Transcription regulation</keyword>
<keyword id="KW-0832">Ubl conjugation</keyword>
<keyword id="KW-0862">Zinc</keyword>
<keyword id="KW-0863">Zinc-finger</keyword>
<comment type="function">
    <text>May be involved in transcriptional regulation.</text>
</comment>
<comment type="interaction">
    <interactant intactId="EBI-751531">
        <id>O15535</id>
    </interactant>
    <interactant intactId="EBI-8643161">
        <id>Q9NX04</id>
        <label>AIRIM</label>
    </interactant>
    <organismsDiffer>false</organismsDiffer>
    <experiments>3</experiments>
</comment>
<comment type="interaction">
    <interactant intactId="EBI-751531">
        <id>O15535</id>
    </interactant>
    <interactant intactId="EBI-2510157">
        <id>Q96EF6</id>
        <label>FBXO17</label>
    </interactant>
    <organismsDiffer>false</organismsDiffer>
    <experiments>3</experiments>
</comment>
<comment type="interaction">
    <interactant intactId="EBI-751531">
        <id>O15535</id>
    </interactant>
    <interactant intactId="EBI-701903">
        <id>Q14192</id>
        <label>FHL2</label>
    </interactant>
    <organismsDiffer>false</organismsDiffer>
    <experiments>3</experiments>
</comment>
<comment type="interaction">
    <interactant intactId="EBI-751531">
        <id>O15535</id>
    </interactant>
    <interactant intactId="EBI-744104">
        <id>P55040</id>
        <label>GEM</label>
    </interactant>
    <organismsDiffer>false</organismsDiffer>
    <experiments>3</experiments>
</comment>
<comment type="interaction">
    <interactant intactId="EBI-751531">
        <id>O15535</id>
    </interactant>
    <interactant intactId="EBI-744302">
        <id>P14136</id>
        <label>GFAP</label>
    </interactant>
    <organismsDiffer>false</organismsDiffer>
    <experiments>3</experiments>
</comment>
<comment type="interaction">
    <interactant intactId="EBI-751531">
        <id>O15535</id>
    </interactant>
    <interactant intactId="EBI-747754">
        <id>P28799</id>
        <label>GRN</label>
    </interactant>
    <organismsDiffer>false</organismsDiffer>
    <experiments>3</experiments>
</comment>
<comment type="interaction">
    <interactant intactId="EBI-751531">
        <id>O15535</id>
    </interactant>
    <interactant intactId="EBI-517086">
        <id>O43464</id>
        <label>HTRA2</label>
    </interactant>
    <organismsDiffer>false</organismsDiffer>
    <experiments>3</experiments>
</comment>
<comment type="interaction">
    <interactant intactId="EBI-751531">
        <id>O15535</id>
    </interactant>
    <interactant intactId="EBI-466029">
        <id>P42858</id>
        <label>HTT</label>
    </interactant>
    <organismsDiffer>false</organismsDiffer>
    <experiments>9</experiments>
</comment>
<comment type="interaction">
    <interactant intactId="EBI-751531">
        <id>O15535</id>
    </interactant>
    <interactant intactId="EBI-1055254">
        <id>Q8WXH2</id>
        <label>JPH3</label>
    </interactant>
    <organismsDiffer>false</organismsDiffer>
    <experiments>3</experiments>
</comment>
<comment type="interaction">
    <interactant intactId="EBI-751531">
        <id>O15535</id>
    </interactant>
    <interactant intactId="EBI-399080">
        <id>Q92993</id>
        <label>KAT5</label>
    </interactant>
    <organismsDiffer>false</organismsDiffer>
    <experiments>3</experiments>
</comment>
<comment type="interaction">
    <interactant intactId="EBI-751531">
        <id>O15535</id>
    </interactant>
    <interactant intactId="EBI-10975473">
        <id>O60333-2</id>
        <label>KIF1B</label>
    </interactant>
    <organismsDiffer>false</organismsDiffer>
    <experiments>3</experiments>
</comment>
<comment type="interaction">
    <interactant intactId="EBI-751531">
        <id>O15535</id>
    </interactant>
    <interactant intactId="EBI-11742507">
        <id>Q8TAP4-4</id>
        <label>LMO3</label>
    </interactant>
    <organismsDiffer>false</organismsDiffer>
    <experiments>6</experiments>
</comment>
<comment type="interaction">
    <interactant intactId="EBI-751531">
        <id>O15535</id>
    </interactant>
    <interactant intactId="EBI-473834">
        <id>Q9H213</id>
        <label>MAGEH1</label>
    </interactant>
    <organismsDiffer>false</organismsDiffer>
    <experiments>3</experiments>
</comment>
<comment type="interaction">
    <interactant intactId="EBI-751531">
        <id>O15535</id>
    </interactant>
    <interactant intactId="EBI-475646">
        <id>P07196</id>
        <label>NEFL</label>
    </interactant>
    <organismsDiffer>false</organismsDiffer>
    <experiments>3</experiments>
</comment>
<comment type="interaction">
    <interactant intactId="EBI-751531">
        <id>O15535</id>
    </interactant>
    <interactant intactId="EBI-25884072">
        <id>P62937-2</id>
        <label>PPIA</label>
    </interactant>
    <organismsDiffer>false</organismsDiffer>
    <experiments>3</experiments>
</comment>
<comment type="interaction">
    <interactant intactId="EBI-751531">
        <id>O15535</id>
    </interactant>
    <interactant intactId="EBI-1383528">
        <id>P17252</id>
        <label>PRKCA</label>
    </interactant>
    <organismsDiffer>false</organismsDiffer>
    <experiments>3</experiments>
</comment>
<comment type="interaction">
    <interactant intactId="EBI-751531">
        <id>O15535</id>
    </interactant>
    <interactant intactId="EBI-749195">
        <id>P60891</id>
        <label>PRPS1</label>
    </interactant>
    <organismsDiffer>false</organismsDiffer>
    <experiments>3</experiments>
</comment>
<comment type="interaction">
    <interactant intactId="EBI-751531">
        <id>O15535</id>
    </interactant>
    <interactant intactId="EBI-9090795">
        <id>Q15047-2</id>
        <label>SETDB1</label>
    </interactant>
    <organismsDiffer>false</organismsDiffer>
    <experiments>3</experiments>
</comment>
<comment type="interaction">
    <interactant intactId="EBI-751531">
        <id>O15535</id>
    </interactant>
    <interactant intactId="EBI-5235340">
        <id>Q7Z699</id>
        <label>SPRED1</label>
    </interactant>
    <organismsDiffer>false</organismsDiffer>
    <experiments>3</experiments>
</comment>
<comment type="interaction">
    <interactant intactId="EBI-751531">
        <id>O15535</id>
    </interactant>
    <interactant intactId="EBI-593303">
        <id>P78362</id>
        <label>SRPK2</label>
    </interactant>
    <organismsDiffer>false</organismsDiffer>
    <experiments>6</experiments>
</comment>
<comment type="interaction">
    <interactant intactId="EBI-751531">
        <id>O15535</id>
    </interactant>
    <interactant intactId="EBI-720609">
        <id>O76024</id>
        <label>WFS1</label>
    </interactant>
    <organismsDiffer>false</organismsDiffer>
    <experiments>3</experiments>
</comment>
<comment type="interaction">
    <interactant intactId="EBI-751531">
        <id>O15535</id>
    </interactant>
    <interactant intactId="EBI-359832">
        <id>P61981</id>
        <label>YWHAG</label>
    </interactant>
    <organismsDiffer>false</organismsDiffer>
    <experiments>3</experiments>
</comment>
<comment type="interaction">
    <interactant intactId="EBI-751531">
        <id>O15535</id>
    </interactant>
    <interactant intactId="EBI-3925851">
        <id>Q9NWS9</id>
        <label>ZNF446</label>
    </interactant>
    <organismsDiffer>false</organismsDiffer>
    <experiments>4</experiments>
</comment>
<comment type="interaction">
    <interactant intactId="EBI-751531">
        <id>O15535</id>
    </interactant>
    <interactant intactId="EBI-740232">
        <id>Q9NWS9-2</id>
        <label>ZNF446</label>
    </interactant>
    <organismsDiffer>false</organismsDiffer>
    <experiments>9</experiments>
</comment>
<comment type="interaction">
    <interactant intactId="EBI-751531">
        <id>O15535</id>
    </interactant>
    <interactant intactId="EBI-10178224">
        <id>P10073</id>
        <label>ZSCAN22</label>
    </interactant>
    <organismsDiffer>false</organismsDiffer>
    <experiments>3</experiments>
</comment>
<comment type="interaction">
    <interactant intactId="EBI-751531">
        <id>O15535</id>
    </interactant>
    <interactant intactId="EBI-5667532">
        <id>Q3MJ62</id>
        <label>ZSCAN23</label>
    </interactant>
    <organismsDiffer>false</organismsDiffer>
    <experiments>3</experiments>
</comment>
<comment type="subcellular location">
    <subcellularLocation>
        <location evidence="2">Nucleus</location>
    </subcellularLocation>
</comment>
<comment type="alternative products">
    <event type="alternative splicing"/>
    <isoform>
        <id>O15535-1</id>
        <name>1</name>
        <sequence type="displayed"/>
    </isoform>
    <isoform>
        <id>O15535-2</id>
        <name>2</name>
        <sequence type="described" ref="VSP_044798"/>
    </isoform>
</comment>
<comment type="similarity">
    <text evidence="5">Belongs to the krueppel C2H2-type zinc-finger protein family.</text>
</comment>